<evidence type="ECO:0000250" key="1"/>
<evidence type="ECO:0000255" key="2">
    <source>
        <dbReference type="HAMAP-Rule" id="MF_00444"/>
    </source>
</evidence>
<keyword id="KW-0963">Cytoplasm</keyword>
<keyword id="KW-0378">Hydrolase</keyword>
<keyword id="KW-0645">Protease</keyword>
<keyword id="KW-0720">Serine protease</keyword>
<keyword id="KW-0865">Zymogen</keyword>
<protein>
    <recommendedName>
        <fullName evidence="2">ATP-dependent Clp protease proteolytic subunit</fullName>
        <ecNumber evidence="2">3.4.21.92</ecNumber>
    </recommendedName>
    <alternativeName>
        <fullName evidence="2">Endopeptidase Clp</fullName>
    </alternativeName>
</protein>
<dbReference type="EC" id="3.4.21.92" evidence="2"/>
<dbReference type="EMBL" id="CP000243">
    <property type="protein sequence ID" value="ABE05966.1"/>
    <property type="molecule type" value="Genomic_DNA"/>
</dbReference>
<dbReference type="RefSeq" id="WP_000122253.1">
    <property type="nucleotide sequence ID" value="NZ_CP064825.1"/>
</dbReference>
<dbReference type="SMR" id="Q1RF98"/>
<dbReference type="MEROPS" id="S14.001"/>
<dbReference type="GeneID" id="93777017"/>
<dbReference type="KEGG" id="eci:UTI89_C0465"/>
<dbReference type="HOGENOM" id="CLU_058707_3_2_6"/>
<dbReference type="Proteomes" id="UP000001952">
    <property type="component" value="Chromosome"/>
</dbReference>
<dbReference type="GO" id="GO:0005737">
    <property type="term" value="C:cytoplasm"/>
    <property type="evidence" value="ECO:0007669"/>
    <property type="project" value="UniProtKB-SubCell"/>
</dbReference>
<dbReference type="GO" id="GO:0009368">
    <property type="term" value="C:endopeptidase Clp complex"/>
    <property type="evidence" value="ECO:0007669"/>
    <property type="project" value="TreeGrafter"/>
</dbReference>
<dbReference type="GO" id="GO:0004176">
    <property type="term" value="F:ATP-dependent peptidase activity"/>
    <property type="evidence" value="ECO:0007669"/>
    <property type="project" value="InterPro"/>
</dbReference>
<dbReference type="GO" id="GO:0051117">
    <property type="term" value="F:ATPase binding"/>
    <property type="evidence" value="ECO:0007669"/>
    <property type="project" value="TreeGrafter"/>
</dbReference>
<dbReference type="GO" id="GO:0004252">
    <property type="term" value="F:serine-type endopeptidase activity"/>
    <property type="evidence" value="ECO:0007669"/>
    <property type="project" value="UniProtKB-UniRule"/>
</dbReference>
<dbReference type="GO" id="GO:0006515">
    <property type="term" value="P:protein quality control for misfolded or incompletely synthesized proteins"/>
    <property type="evidence" value="ECO:0007669"/>
    <property type="project" value="TreeGrafter"/>
</dbReference>
<dbReference type="CDD" id="cd07017">
    <property type="entry name" value="S14_ClpP_2"/>
    <property type="match status" value="1"/>
</dbReference>
<dbReference type="FunFam" id="3.90.226.10:FF:000001">
    <property type="entry name" value="ATP-dependent Clp protease proteolytic subunit"/>
    <property type="match status" value="1"/>
</dbReference>
<dbReference type="Gene3D" id="3.90.226.10">
    <property type="entry name" value="2-enoyl-CoA Hydratase, Chain A, domain 1"/>
    <property type="match status" value="1"/>
</dbReference>
<dbReference type="HAMAP" id="MF_00444">
    <property type="entry name" value="ClpP"/>
    <property type="match status" value="1"/>
</dbReference>
<dbReference type="InterPro" id="IPR001907">
    <property type="entry name" value="ClpP"/>
</dbReference>
<dbReference type="InterPro" id="IPR029045">
    <property type="entry name" value="ClpP/crotonase-like_dom_sf"/>
</dbReference>
<dbReference type="InterPro" id="IPR023562">
    <property type="entry name" value="ClpP/TepA"/>
</dbReference>
<dbReference type="InterPro" id="IPR033135">
    <property type="entry name" value="ClpP_His_AS"/>
</dbReference>
<dbReference type="InterPro" id="IPR018215">
    <property type="entry name" value="ClpP_Ser_AS"/>
</dbReference>
<dbReference type="NCBIfam" id="TIGR00493">
    <property type="entry name" value="clpP"/>
    <property type="match status" value="1"/>
</dbReference>
<dbReference type="NCBIfam" id="NF001368">
    <property type="entry name" value="PRK00277.1"/>
    <property type="match status" value="1"/>
</dbReference>
<dbReference type="NCBIfam" id="NF009205">
    <property type="entry name" value="PRK12553.1"/>
    <property type="match status" value="1"/>
</dbReference>
<dbReference type="PANTHER" id="PTHR10381">
    <property type="entry name" value="ATP-DEPENDENT CLP PROTEASE PROTEOLYTIC SUBUNIT"/>
    <property type="match status" value="1"/>
</dbReference>
<dbReference type="PANTHER" id="PTHR10381:SF70">
    <property type="entry name" value="ATP-DEPENDENT CLP PROTEASE PROTEOLYTIC SUBUNIT"/>
    <property type="match status" value="1"/>
</dbReference>
<dbReference type="Pfam" id="PF00574">
    <property type="entry name" value="CLP_protease"/>
    <property type="match status" value="1"/>
</dbReference>
<dbReference type="PRINTS" id="PR00127">
    <property type="entry name" value="CLPPROTEASEP"/>
</dbReference>
<dbReference type="SUPFAM" id="SSF52096">
    <property type="entry name" value="ClpP/crotonase"/>
    <property type="match status" value="1"/>
</dbReference>
<dbReference type="PROSITE" id="PS00382">
    <property type="entry name" value="CLP_PROTEASE_HIS"/>
    <property type="match status" value="1"/>
</dbReference>
<dbReference type="PROSITE" id="PS00381">
    <property type="entry name" value="CLP_PROTEASE_SER"/>
    <property type="match status" value="1"/>
</dbReference>
<feature type="propeptide" id="PRO_0000268013" evidence="1">
    <location>
        <begin position="1"/>
        <end position="14"/>
    </location>
</feature>
<feature type="chain" id="PRO_0000252816" description="ATP-dependent Clp protease proteolytic subunit">
    <location>
        <begin position="15"/>
        <end position="207"/>
    </location>
</feature>
<feature type="active site" description="Nucleophile" evidence="2">
    <location>
        <position position="111"/>
    </location>
</feature>
<feature type="active site" evidence="2">
    <location>
        <position position="136"/>
    </location>
</feature>
<sequence>MSYSGERDNFAPHMALVPMVIEQTSRGERSFDIYSRLLKERVIFLTGQVEDHMANLIVAQMLFLEAENPEKDIYLYINSPGGVITAGMSIYDTMQFIKPDVSTICMGQAASMGAFLLTAGAKGKRFCLPNSRVMIHQPLGGYQGQATDIEIHAREILKVKGRMNELMALHTGQSLEQIERDTERDRFLSAPEAVEYGLVDSILTHRN</sequence>
<accession>Q1RF98</accession>
<comment type="function">
    <text evidence="2">Cleaves peptides in various proteins in a process that requires ATP hydrolysis. Has a chymotrypsin-like activity. Plays a major role in the degradation of misfolded proteins.</text>
</comment>
<comment type="catalytic activity">
    <reaction evidence="2">
        <text>Hydrolysis of proteins to small peptides in the presence of ATP and magnesium. alpha-casein is the usual test substrate. In the absence of ATP, only oligopeptides shorter than five residues are hydrolyzed (such as succinyl-Leu-Tyr-|-NHMec, and Leu-Tyr-Leu-|-Tyr-Trp, in which cleavage of the -Tyr-|-Leu- and -Tyr-|-Trp bonds also occurs).</text>
        <dbReference type="EC" id="3.4.21.92"/>
    </reaction>
</comment>
<comment type="subunit">
    <text evidence="2">Fourteen ClpP subunits assemble into 2 heptameric rings which stack back to back to give a disk-like structure with a central cavity, resembling the structure of eukaryotic proteasomes. Component of the ClpAP and ClpXP complexes.</text>
</comment>
<comment type="subcellular location">
    <subcellularLocation>
        <location evidence="2">Cytoplasm</location>
    </subcellularLocation>
</comment>
<comment type="similarity">
    <text evidence="2">Belongs to the peptidase S14 family.</text>
</comment>
<gene>
    <name evidence="2" type="primary">clpP</name>
    <name type="ordered locus">UTI89_C0465</name>
</gene>
<reference key="1">
    <citation type="journal article" date="2006" name="Proc. Natl. Acad. Sci. U.S.A.">
        <title>Identification of genes subject to positive selection in uropathogenic strains of Escherichia coli: a comparative genomics approach.</title>
        <authorList>
            <person name="Chen S.L."/>
            <person name="Hung C.-S."/>
            <person name="Xu J."/>
            <person name="Reigstad C.S."/>
            <person name="Magrini V."/>
            <person name="Sabo A."/>
            <person name="Blasiar D."/>
            <person name="Bieri T."/>
            <person name="Meyer R.R."/>
            <person name="Ozersky P."/>
            <person name="Armstrong J.R."/>
            <person name="Fulton R.S."/>
            <person name="Latreille J.P."/>
            <person name="Spieth J."/>
            <person name="Hooton T.M."/>
            <person name="Mardis E.R."/>
            <person name="Hultgren S.J."/>
            <person name="Gordon J.I."/>
        </authorList>
    </citation>
    <scope>NUCLEOTIDE SEQUENCE [LARGE SCALE GENOMIC DNA]</scope>
    <source>
        <strain>UTI89 / UPEC</strain>
    </source>
</reference>
<organism>
    <name type="scientific">Escherichia coli (strain UTI89 / UPEC)</name>
    <dbReference type="NCBI Taxonomy" id="364106"/>
    <lineage>
        <taxon>Bacteria</taxon>
        <taxon>Pseudomonadati</taxon>
        <taxon>Pseudomonadota</taxon>
        <taxon>Gammaproteobacteria</taxon>
        <taxon>Enterobacterales</taxon>
        <taxon>Enterobacteriaceae</taxon>
        <taxon>Escherichia</taxon>
    </lineage>
</organism>
<proteinExistence type="inferred from homology"/>
<name>CLPP_ECOUT</name>